<reference key="1">
    <citation type="book" date="2006" name="Gram positive pathogens, 2nd edition">
        <title>The Staphylococcus aureus NCTC 8325 genome.</title>
        <editorList>
            <person name="Fischetti V."/>
            <person name="Novick R."/>
            <person name="Ferretti J."/>
            <person name="Portnoy D."/>
            <person name="Rood J."/>
        </editorList>
        <authorList>
            <person name="Gillaspy A.F."/>
            <person name="Worrell V."/>
            <person name="Orvis J."/>
            <person name="Roe B.A."/>
            <person name="Dyer D.W."/>
            <person name="Iandolo J.J."/>
        </authorList>
    </citation>
    <scope>NUCLEOTIDE SEQUENCE [LARGE SCALE GENOMIC DNA]</scope>
    <source>
        <strain>NCTC 8325 / PS 47</strain>
    </source>
</reference>
<reference key="2">
    <citation type="journal article" date="2001" name="Infect. Immun.">
        <title>PerR controls oxidative stress resistance and iron storage proteins and is required for virulence in Staphylococcus aureus.</title>
        <authorList>
            <person name="Horsburgh M.J."/>
            <person name="Clements M.O."/>
            <person name="Crossley H."/>
            <person name="Ingham E."/>
            <person name="Foster S.J."/>
        </authorList>
    </citation>
    <scope>CHARACTERIZATION</scope>
    <scope>AUTOREGULATION</scope>
</reference>
<reference key="3">
    <citation type="journal article" date="2002" name="Mol. Microbiol.">
        <title>MntR modulates expression of the perR regulon and superoxide resistance in Staphylococcus aureus through control of manganese uptake.</title>
        <authorList>
            <person name="Horsburgh M.J."/>
            <person name="Wharton S.J."/>
            <person name="Cox A.G."/>
            <person name="Ingham E."/>
            <person name="Peacock S."/>
            <person name="Foster S.J."/>
        </authorList>
    </citation>
    <scope>FUNCTION</scope>
</reference>
<reference key="4">
    <citation type="journal article" date="2006" name="Microbiology">
        <title>The impairment of superoxide dismutase coordinates the derepression of the perR regulon in the response of Staphylococcus aureus to HOCl stress.</title>
        <authorList>
            <person name="Maalej S."/>
            <person name="Dammak I."/>
            <person name="Dukan S."/>
        </authorList>
    </citation>
    <scope>INDUCTION BY HYPOCHLOROUS ACID</scope>
</reference>
<gene>
    <name type="primary">perR</name>
    <name type="ordered locus">SAOUHSC_01997</name>
</gene>
<keyword id="KW-0963">Cytoplasm</keyword>
<keyword id="KW-0238">DNA-binding</keyword>
<keyword id="KW-0464">Manganese</keyword>
<keyword id="KW-0479">Metal-binding</keyword>
<keyword id="KW-1185">Reference proteome</keyword>
<keyword id="KW-0678">Repressor</keyword>
<keyword id="KW-0804">Transcription</keyword>
<keyword id="KW-0805">Transcription regulation</keyword>
<keyword id="KW-0862">Zinc</keyword>
<sequence length="148" mass="17183">MSVEIESIEHELEESIASLRQAGVRITPQRQAILRYLISSHTHPTADEIYQALSPDFPNISVATIYNNLRVFKDIGIVKELTYGDSSSRFDFNTHNHYHIICEQCGKIVDFQYPQLNEIERLAQHMTDFDVTHHRMEIYGVCKECQDK</sequence>
<accession>Q2G282</accession>
<protein>
    <recommendedName>
        <fullName>Peroxide-responsive repressor PerR</fullName>
    </recommendedName>
</protein>
<dbReference type="EMBL" id="CP000253">
    <property type="protein sequence ID" value="ABD31053.1"/>
    <property type="molecule type" value="Genomic_DNA"/>
</dbReference>
<dbReference type="RefSeq" id="WP_000110011.1">
    <property type="nucleotide sequence ID" value="NZ_LS483365.1"/>
</dbReference>
<dbReference type="RefSeq" id="YP_500494.1">
    <property type="nucleotide sequence ID" value="NC_007795.1"/>
</dbReference>
<dbReference type="SMR" id="Q2G282"/>
<dbReference type="STRING" id="93061.SAOUHSC_01997"/>
<dbReference type="PaxDb" id="1280-SAXN108_1890"/>
<dbReference type="GeneID" id="3921877"/>
<dbReference type="GeneID" id="98346243"/>
<dbReference type="KEGG" id="sao:SAOUHSC_01997"/>
<dbReference type="PATRIC" id="fig|93061.5.peg.1814"/>
<dbReference type="eggNOG" id="COG0735">
    <property type="taxonomic scope" value="Bacteria"/>
</dbReference>
<dbReference type="HOGENOM" id="CLU_096072_4_2_9"/>
<dbReference type="OrthoDB" id="8659436at2"/>
<dbReference type="PHI-base" id="PHI:4991"/>
<dbReference type="PRO" id="PR:Q2G282"/>
<dbReference type="Proteomes" id="UP000008816">
    <property type="component" value="Chromosome"/>
</dbReference>
<dbReference type="CollecTF" id="EXPREG_00000d90"/>
<dbReference type="GO" id="GO:0005737">
    <property type="term" value="C:cytoplasm"/>
    <property type="evidence" value="ECO:0007669"/>
    <property type="project" value="UniProtKB-SubCell"/>
</dbReference>
<dbReference type="GO" id="GO:0003700">
    <property type="term" value="F:DNA-binding transcription factor activity"/>
    <property type="evidence" value="ECO:0000318"/>
    <property type="project" value="GO_Central"/>
</dbReference>
<dbReference type="GO" id="GO:0000976">
    <property type="term" value="F:transcription cis-regulatory region binding"/>
    <property type="evidence" value="ECO:0000318"/>
    <property type="project" value="GO_Central"/>
</dbReference>
<dbReference type="GO" id="GO:0008270">
    <property type="term" value="F:zinc ion binding"/>
    <property type="evidence" value="ECO:0000318"/>
    <property type="project" value="GO_Central"/>
</dbReference>
<dbReference type="GO" id="GO:0045892">
    <property type="term" value="P:negative regulation of DNA-templated transcription"/>
    <property type="evidence" value="ECO:0000318"/>
    <property type="project" value="GO_Central"/>
</dbReference>
<dbReference type="GO" id="GO:1900376">
    <property type="term" value="P:regulation of secondary metabolite biosynthetic process"/>
    <property type="evidence" value="ECO:0000318"/>
    <property type="project" value="GO_Central"/>
</dbReference>
<dbReference type="CDD" id="cd07153">
    <property type="entry name" value="Fur_like"/>
    <property type="match status" value="1"/>
</dbReference>
<dbReference type="FunFam" id="1.10.10.10:FF:000147">
    <property type="entry name" value="Fur family transcriptional regulator"/>
    <property type="match status" value="1"/>
</dbReference>
<dbReference type="FunFam" id="3.30.1490.190:FF:000003">
    <property type="entry name" value="Fur family transcriptional regulator"/>
    <property type="match status" value="1"/>
</dbReference>
<dbReference type="Gene3D" id="3.30.1490.190">
    <property type="match status" value="1"/>
</dbReference>
<dbReference type="Gene3D" id="1.10.10.10">
    <property type="entry name" value="Winged helix-like DNA-binding domain superfamily/Winged helix DNA-binding domain"/>
    <property type="match status" value="1"/>
</dbReference>
<dbReference type="InterPro" id="IPR002481">
    <property type="entry name" value="FUR"/>
</dbReference>
<dbReference type="InterPro" id="IPR043135">
    <property type="entry name" value="Fur_C"/>
</dbReference>
<dbReference type="InterPro" id="IPR036388">
    <property type="entry name" value="WH-like_DNA-bd_sf"/>
</dbReference>
<dbReference type="InterPro" id="IPR036390">
    <property type="entry name" value="WH_DNA-bd_sf"/>
</dbReference>
<dbReference type="PANTHER" id="PTHR33202:SF8">
    <property type="entry name" value="PEROXIDE-RESPONSIVE REPRESSOR PERR"/>
    <property type="match status" value="1"/>
</dbReference>
<dbReference type="PANTHER" id="PTHR33202">
    <property type="entry name" value="ZINC UPTAKE REGULATION PROTEIN"/>
    <property type="match status" value="1"/>
</dbReference>
<dbReference type="Pfam" id="PF01475">
    <property type="entry name" value="FUR"/>
    <property type="match status" value="1"/>
</dbReference>
<dbReference type="SUPFAM" id="SSF46785">
    <property type="entry name" value="Winged helix' DNA-binding domain"/>
    <property type="match status" value="1"/>
</dbReference>
<comment type="function">
    <text evidence="2">Manganese-dependent repressor that controls a regulon of oxidative stress resistance and iron-storage proteins. Regulates expression of genes encoding antioxidant proteins, such as katA, ahpCF, bcp and trxB. Also regulates expression of the iron-storage protein ftn, the ferritin-like protein mrgA, the ferric uptake regulator fur, the manganese transporter operon mntABC, and its own expression. May act as a hydrogen peroxide and organic hydroperoxide sensor. Required for full virulence in a murine skin abscess model of infection.</text>
</comment>
<comment type="subcellular location">
    <subcellularLocation>
        <location evidence="1">Cytoplasm</location>
    </subcellularLocation>
</comment>
<comment type="induction">
    <text evidence="3">Autoregulated. Induced by low levels of hypochlorous acid via superoxide dismutase inactivation.</text>
</comment>
<comment type="similarity">
    <text evidence="4">Belongs to the Fur family.</text>
</comment>
<evidence type="ECO:0000250" key="1"/>
<evidence type="ECO:0000269" key="2">
    <source>
    </source>
</evidence>
<evidence type="ECO:0000269" key="3">
    <source>
    </source>
</evidence>
<evidence type="ECO:0000305" key="4"/>
<proteinExistence type="evidence at protein level"/>
<feature type="chain" id="PRO_0000289017" description="Peroxide-responsive repressor PerR">
    <location>
        <begin position="1"/>
        <end position="148"/>
    </location>
</feature>
<feature type="region of interest" description="DNA-binding" evidence="1">
    <location>
        <begin position="1"/>
        <end position="84"/>
    </location>
</feature>
<feature type="binding site" evidence="1">
    <location>
        <position position="102"/>
    </location>
    <ligand>
        <name>Zn(2+)</name>
        <dbReference type="ChEBI" id="CHEBI:29105"/>
    </ligand>
</feature>
<feature type="binding site" evidence="1">
    <location>
        <position position="105"/>
    </location>
    <ligand>
        <name>Zn(2+)</name>
        <dbReference type="ChEBI" id="CHEBI:29105"/>
    </ligand>
</feature>
<feature type="binding site" evidence="1">
    <location>
        <position position="142"/>
    </location>
    <ligand>
        <name>Zn(2+)</name>
        <dbReference type="ChEBI" id="CHEBI:29105"/>
    </ligand>
</feature>
<feature type="binding site" evidence="1">
    <location>
        <position position="145"/>
    </location>
    <ligand>
        <name>Zn(2+)</name>
        <dbReference type="ChEBI" id="CHEBI:29105"/>
    </ligand>
</feature>
<organism>
    <name type="scientific">Staphylococcus aureus (strain NCTC 8325 / PS 47)</name>
    <dbReference type="NCBI Taxonomy" id="93061"/>
    <lineage>
        <taxon>Bacteria</taxon>
        <taxon>Bacillati</taxon>
        <taxon>Bacillota</taxon>
        <taxon>Bacilli</taxon>
        <taxon>Bacillales</taxon>
        <taxon>Staphylococcaceae</taxon>
        <taxon>Staphylococcus</taxon>
    </lineage>
</organism>
<name>PERR_STAA8</name>